<name>DNLI1_ARATH</name>
<accession>Q42572</accession>
<accession>Q541Y6</accession>
<accession>Q56W81</accession>
<accession>Q9LMZ4</accession>
<accession>Q9SGE5</accession>
<feature type="transit peptide" description="Mitochondrion" evidence="2">
    <location>
        <begin position="1"/>
        <end position="64"/>
    </location>
</feature>
<feature type="chain" id="PRO_0000059586" description="DNA ligase 1">
    <location>
        <begin position="65"/>
        <end position="790"/>
    </location>
</feature>
<feature type="region of interest" description="Disordered" evidence="4">
    <location>
        <begin position="64"/>
        <end position="142"/>
    </location>
</feature>
<feature type="region of interest" description="Interaction with target DNA" evidence="1">
    <location>
        <begin position="337"/>
        <end position="346"/>
    </location>
</feature>
<feature type="region of interest" description="Interaction with target DNA" evidence="1">
    <location>
        <begin position="518"/>
        <end position="520"/>
    </location>
</feature>
<feature type="region of interest" description="Disordered" evidence="4">
    <location>
        <begin position="757"/>
        <end position="790"/>
    </location>
</feature>
<feature type="short sequence motif" description="Nuclear localization signal 1" evidence="1">
    <location>
        <begin position="68"/>
        <end position="75"/>
    </location>
</feature>
<feature type="short sequence motif" description="Nuclear localization signal 2" evidence="1">
    <location>
        <begin position="505"/>
        <end position="512"/>
    </location>
</feature>
<feature type="compositionally biased region" description="Polar residues" evidence="4">
    <location>
        <begin position="116"/>
        <end position="128"/>
    </location>
</feature>
<feature type="compositionally biased region" description="Basic and acidic residues" evidence="4">
    <location>
        <begin position="781"/>
        <end position="790"/>
    </location>
</feature>
<feature type="active site" description="N6-AMP-lysine intermediate" evidence="3">
    <location>
        <position position="444"/>
    </location>
</feature>
<feature type="binding site" evidence="1">
    <location>
        <position position="442"/>
    </location>
    <ligand>
        <name>ATP</name>
        <dbReference type="ChEBI" id="CHEBI:30616"/>
    </ligand>
</feature>
<feature type="binding site" evidence="1">
    <location>
        <position position="449"/>
    </location>
    <ligand>
        <name>ATP</name>
        <dbReference type="ChEBI" id="CHEBI:30616"/>
    </ligand>
</feature>
<feature type="binding site" evidence="1">
    <location>
        <position position="465"/>
    </location>
    <ligand>
        <name>ATP</name>
        <dbReference type="ChEBI" id="CHEBI:30616"/>
    </ligand>
</feature>
<feature type="binding site" evidence="1">
    <location>
        <position position="497"/>
    </location>
    <ligand>
        <name>Mg(2+)</name>
        <dbReference type="ChEBI" id="CHEBI:18420"/>
        <label>1</label>
    </ligand>
</feature>
<feature type="binding site" evidence="1">
    <location>
        <position position="596"/>
    </location>
    <ligand>
        <name>Mg(2+)</name>
        <dbReference type="ChEBI" id="CHEBI:18420"/>
        <label>2</label>
    </ligand>
</feature>
<feature type="binding site" evidence="1">
    <location>
        <position position="601"/>
    </location>
    <ligand>
        <name>ATP</name>
        <dbReference type="ChEBI" id="CHEBI:30616"/>
    </ligand>
</feature>
<feature type="binding site" evidence="1">
    <location>
        <position position="614"/>
    </location>
    <ligand>
        <name>ATP</name>
        <dbReference type="ChEBI" id="CHEBI:30616"/>
    </ligand>
</feature>
<feature type="binding site" evidence="1">
    <location>
        <position position="620"/>
    </location>
    <ligand>
        <name>ATP</name>
        <dbReference type="ChEBI" id="CHEBI:30616"/>
    </ligand>
</feature>
<feature type="site" description="Interaction with target DNA" evidence="1">
    <location>
        <position position="193"/>
    </location>
</feature>
<feature type="site" description="Interaction with target DNA" evidence="1">
    <location>
        <position position="466"/>
    </location>
</feature>
<feature type="site" description="Interaction with target DNA" evidence="1">
    <location>
        <position position="646"/>
    </location>
</feature>
<feature type="site" description="Interaction with target DNA" evidence="1">
    <location>
        <position position="671"/>
    </location>
</feature>
<feature type="splice variant" id="VSP_043693" description="In isoform 3." evidence="7">
    <location>
        <begin position="1"/>
        <end position="59"/>
    </location>
</feature>
<feature type="splice variant" id="VSP_043694" description="In isoform 2." evidence="7">
    <location>
        <begin position="1"/>
        <end position="47"/>
    </location>
</feature>
<feature type="sequence conflict" description="In Ref. 1; CAA66599." evidence="7" ref="1">
    <original>A</original>
    <variation>P</variation>
    <location>
        <position position="639"/>
    </location>
</feature>
<gene>
    <name type="primary">LIG1</name>
    <name type="ordered locus">At1g08130</name>
    <name type="ORF">T23G18.1</name>
    <name type="ORF">T6D22.23</name>
</gene>
<proteinExistence type="evidence at transcript level"/>
<keyword id="KW-0024">Alternative initiation</keyword>
<keyword id="KW-0067">ATP-binding</keyword>
<keyword id="KW-0131">Cell cycle</keyword>
<keyword id="KW-0132">Cell division</keyword>
<keyword id="KW-0227">DNA damage</keyword>
<keyword id="KW-0233">DNA recombination</keyword>
<keyword id="KW-0234">DNA repair</keyword>
<keyword id="KW-0235">DNA replication</keyword>
<keyword id="KW-0436">Ligase</keyword>
<keyword id="KW-0460">Magnesium</keyword>
<keyword id="KW-0479">Metal-binding</keyword>
<keyword id="KW-0496">Mitochondrion</keyword>
<keyword id="KW-0547">Nucleotide-binding</keyword>
<keyword id="KW-0539">Nucleus</keyword>
<keyword id="KW-1185">Reference proteome</keyword>
<keyword id="KW-0677">Repeat</keyword>
<keyword id="KW-0809">Transit peptide</keyword>
<sequence>MLAIRSSNYLRCIPSLCTKTQISQFSSVLISFSRQISHLRLSSCHRAMSSSRPSAFDALMSNARAAAKKKTPQTTNLSRSPNKRKIGETQDANLGKTIVSEGTLPKTEDLLEPVSDSANPRSDTSSIAEDSKTGAKKAKTLSKTDEMKSKIGLLKKKPNDFDPEKMSCWEKGERVPFLFVALAFDLISNESGRIVITDILCNMLRTVIATTPEDLVATVYLSANEIAPAHEGVELGIGESTIIKAISEAFGRTEDHVKKQNTELGDLGLVAKGSRSTQTMMFKPEPLTVVKVFDTFRQIAKESGKDSNEKKKNRMKALLVATTDCEPLYLTRLLQAKLRLGFSGQTVLAALGQAAVYNEEHSKPPPNTKSPLEEAAKIVKQVFTVLPVYDIIVPALLSGGVWNLPKTCNFTLGVPIGPMLAKPTKGVAEILNKFQDIVFTCEYKYDGERAQIHFMEDGTFEIYSRNAERNTGKYPDVALALSRLKKPSVKSFILDCEVVAFDREKKKILPFQILSTRARKNVNVNDIKVGVCIFAFDMLYLNGQQLIQENLKIRREKLYESFEEDPGYFQFATAVTSNDIDEIQKFLDASVDVGCEGLIIKTLDSDATYEPAKRSNNWLKLKKDYMDSIGDSVDLVPIAAFHGRGKRTGVYGAFLLACYDVDKEEFQSICKIGTGFSDAMLDERSSSLRSQVIATPKQYYRVGDSLNPDVWFEPTEVWEVKAADLTISPVHRAATGIVDPDKGISLRFPRLLRVREDKKPEEATSSEQIADLYQAQKHNHPSNEVKGDDD</sequence>
<reference key="1">
    <citation type="journal article" date="1998" name="Plant J.">
        <title>Molecular cloning and functional analysis of the Arabidopsis thaliana DNA ligase I homologue.</title>
        <authorList>
            <person name="Taylor R.M."/>
            <person name="Hamer M.J."/>
            <person name="Rosamond J."/>
            <person name="Bray C.M."/>
        </authorList>
    </citation>
    <scope>NUCLEOTIDE SEQUENCE [MRNA]</scope>
    <source>
        <strain>cv. Landsberg erecta</strain>
    </source>
</reference>
<reference key="2">
    <citation type="journal article" date="2000" name="Nature">
        <title>Sequence and analysis of chromosome 1 of the plant Arabidopsis thaliana.</title>
        <authorList>
            <person name="Theologis A."/>
            <person name="Ecker J.R."/>
            <person name="Palm C.J."/>
            <person name="Federspiel N.A."/>
            <person name="Kaul S."/>
            <person name="White O."/>
            <person name="Alonso J."/>
            <person name="Altafi H."/>
            <person name="Araujo R."/>
            <person name="Bowman C.L."/>
            <person name="Brooks S.Y."/>
            <person name="Buehler E."/>
            <person name="Chan A."/>
            <person name="Chao Q."/>
            <person name="Chen H."/>
            <person name="Cheuk R.F."/>
            <person name="Chin C.W."/>
            <person name="Chung M.K."/>
            <person name="Conn L."/>
            <person name="Conway A.B."/>
            <person name="Conway A.R."/>
            <person name="Creasy T.H."/>
            <person name="Dewar K."/>
            <person name="Dunn P."/>
            <person name="Etgu P."/>
            <person name="Feldblyum T.V."/>
            <person name="Feng J.-D."/>
            <person name="Fong B."/>
            <person name="Fujii C.Y."/>
            <person name="Gill J.E."/>
            <person name="Goldsmith A.D."/>
            <person name="Haas B."/>
            <person name="Hansen N.F."/>
            <person name="Hughes B."/>
            <person name="Huizar L."/>
            <person name="Hunter J.L."/>
            <person name="Jenkins J."/>
            <person name="Johnson-Hopson C."/>
            <person name="Khan S."/>
            <person name="Khaykin E."/>
            <person name="Kim C.J."/>
            <person name="Koo H.L."/>
            <person name="Kremenetskaia I."/>
            <person name="Kurtz D.B."/>
            <person name="Kwan A."/>
            <person name="Lam B."/>
            <person name="Langin-Hooper S."/>
            <person name="Lee A."/>
            <person name="Lee J.M."/>
            <person name="Lenz C.A."/>
            <person name="Li J.H."/>
            <person name="Li Y.-P."/>
            <person name="Lin X."/>
            <person name="Liu S.X."/>
            <person name="Liu Z.A."/>
            <person name="Luros J.S."/>
            <person name="Maiti R."/>
            <person name="Marziali A."/>
            <person name="Militscher J."/>
            <person name="Miranda M."/>
            <person name="Nguyen M."/>
            <person name="Nierman W.C."/>
            <person name="Osborne B.I."/>
            <person name="Pai G."/>
            <person name="Peterson J."/>
            <person name="Pham P.K."/>
            <person name="Rizzo M."/>
            <person name="Rooney T."/>
            <person name="Rowley D."/>
            <person name="Sakano H."/>
            <person name="Salzberg S.L."/>
            <person name="Schwartz J.R."/>
            <person name="Shinn P."/>
            <person name="Southwick A.M."/>
            <person name="Sun H."/>
            <person name="Tallon L.J."/>
            <person name="Tambunga G."/>
            <person name="Toriumi M.J."/>
            <person name="Town C.D."/>
            <person name="Utterback T."/>
            <person name="Van Aken S."/>
            <person name="Vaysberg M."/>
            <person name="Vysotskaia V.S."/>
            <person name="Walker M."/>
            <person name="Wu D."/>
            <person name="Yu G."/>
            <person name="Fraser C.M."/>
            <person name="Venter J.C."/>
            <person name="Davis R.W."/>
        </authorList>
    </citation>
    <scope>NUCLEOTIDE SEQUENCE [LARGE SCALE GENOMIC DNA]</scope>
    <source>
        <strain>cv. Columbia</strain>
    </source>
</reference>
<reference key="3">
    <citation type="journal article" date="2017" name="Plant J.">
        <title>Araport11: a complete reannotation of the Arabidopsis thaliana reference genome.</title>
        <authorList>
            <person name="Cheng C.Y."/>
            <person name="Krishnakumar V."/>
            <person name="Chan A.P."/>
            <person name="Thibaud-Nissen F."/>
            <person name="Schobel S."/>
            <person name="Town C.D."/>
        </authorList>
    </citation>
    <scope>GENOME REANNOTATION</scope>
    <source>
        <strain>cv. Columbia</strain>
    </source>
</reference>
<reference key="4">
    <citation type="journal article" date="2002" name="Science">
        <title>Functional annotation of a full-length Arabidopsis cDNA collection.</title>
        <authorList>
            <person name="Seki M."/>
            <person name="Narusaka M."/>
            <person name="Kamiya A."/>
            <person name="Ishida J."/>
            <person name="Satou M."/>
            <person name="Sakurai T."/>
            <person name="Nakajima M."/>
            <person name="Enju A."/>
            <person name="Akiyama K."/>
            <person name="Oono Y."/>
            <person name="Muramatsu M."/>
            <person name="Hayashizaki Y."/>
            <person name="Kawai J."/>
            <person name="Carninci P."/>
            <person name="Itoh M."/>
            <person name="Ishii Y."/>
            <person name="Arakawa T."/>
            <person name="Shibata K."/>
            <person name="Shinagawa A."/>
            <person name="Shinozaki K."/>
        </authorList>
    </citation>
    <scope>NUCLEOTIDE SEQUENCE [LARGE SCALE MRNA]</scope>
    <source>
        <strain>cv. Columbia</strain>
    </source>
</reference>
<reference key="5">
    <citation type="journal article" date="2003" name="Science">
        <title>Empirical analysis of transcriptional activity in the Arabidopsis genome.</title>
        <authorList>
            <person name="Yamada K."/>
            <person name="Lim J."/>
            <person name="Dale J.M."/>
            <person name="Chen H."/>
            <person name="Shinn P."/>
            <person name="Palm C.J."/>
            <person name="Southwick A.M."/>
            <person name="Wu H.C."/>
            <person name="Kim C.J."/>
            <person name="Nguyen M."/>
            <person name="Pham P.K."/>
            <person name="Cheuk R.F."/>
            <person name="Karlin-Newmann G."/>
            <person name="Liu S.X."/>
            <person name="Lam B."/>
            <person name="Sakano H."/>
            <person name="Wu T."/>
            <person name="Yu G."/>
            <person name="Miranda M."/>
            <person name="Quach H.L."/>
            <person name="Tripp M."/>
            <person name="Chang C.H."/>
            <person name="Lee J.M."/>
            <person name="Toriumi M.J."/>
            <person name="Chan M.M."/>
            <person name="Tang C.C."/>
            <person name="Onodera C.S."/>
            <person name="Deng J.M."/>
            <person name="Akiyama K."/>
            <person name="Ansari Y."/>
            <person name="Arakawa T."/>
            <person name="Banh J."/>
            <person name="Banno F."/>
            <person name="Bowser L."/>
            <person name="Brooks S.Y."/>
            <person name="Carninci P."/>
            <person name="Chao Q."/>
            <person name="Choy N."/>
            <person name="Enju A."/>
            <person name="Goldsmith A.D."/>
            <person name="Gurjal M."/>
            <person name="Hansen N.F."/>
            <person name="Hayashizaki Y."/>
            <person name="Johnson-Hopson C."/>
            <person name="Hsuan V.W."/>
            <person name="Iida K."/>
            <person name="Karnes M."/>
            <person name="Khan S."/>
            <person name="Koesema E."/>
            <person name="Ishida J."/>
            <person name="Jiang P.X."/>
            <person name="Jones T."/>
            <person name="Kawai J."/>
            <person name="Kamiya A."/>
            <person name="Meyers C."/>
            <person name="Nakajima M."/>
            <person name="Narusaka M."/>
            <person name="Seki M."/>
            <person name="Sakurai T."/>
            <person name="Satou M."/>
            <person name="Tamse R."/>
            <person name="Vaysberg M."/>
            <person name="Wallender E.K."/>
            <person name="Wong C."/>
            <person name="Yamamura Y."/>
            <person name="Yuan S."/>
            <person name="Shinozaki K."/>
            <person name="Davis R.W."/>
            <person name="Theologis A."/>
            <person name="Ecker J.R."/>
        </authorList>
    </citation>
    <scope>NUCLEOTIDE SEQUENCE [LARGE SCALE MRNA]</scope>
    <source>
        <strain>cv. Columbia</strain>
    </source>
</reference>
<reference key="6">
    <citation type="submission" date="2005-03" db="EMBL/GenBank/DDBJ databases">
        <title>Large-scale analysis of RIKEN Arabidopsis full-length (RAFL) cDNAs.</title>
        <authorList>
            <person name="Totoki Y."/>
            <person name="Seki M."/>
            <person name="Ishida J."/>
            <person name="Nakajima M."/>
            <person name="Enju A."/>
            <person name="Kamiya A."/>
            <person name="Narusaka M."/>
            <person name="Shin-i T."/>
            <person name="Nakagawa M."/>
            <person name="Sakamoto N."/>
            <person name="Oishi K."/>
            <person name="Kohara Y."/>
            <person name="Kobayashi M."/>
            <person name="Toyoda A."/>
            <person name="Sakaki Y."/>
            <person name="Sakurai T."/>
            <person name="Iida K."/>
            <person name="Akiyama K."/>
            <person name="Satou M."/>
            <person name="Toyoda T."/>
            <person name="Konagaya A."/>
            <person name="Carninci P."/>
            <person name="Kawai J."/>
            <person name="Hayashizaki Y."/>
            <person name="Shinozaki K."/>
        </authorList>
    </citation>
    <scope>NUCLEOTIDE SEQUENCE [LARGE SCALE MRNA] OF 427-790</scope>
    <source>
        <strain>cv. Columbia</strain>
    </source>
</reference>
<reference key="7">
    <citation type="journal article" date="2006" name="Plant J.">
        <title>An evolutionarily conserved translation initiation mechanism regulates nuclear or mitochondrial targeting of DNA ligase 1 in Arabidopsis thaliana.</title>
        <authorList>
            <person name="Sunderland P.A."/>
            <person name="West C.E."/>
            <person name="Waterworth W.M."/>
            <person name="Bray C.M."/>
        </authorList>
    </citation>
    <scope>IDENTIFICATION OF ISOFORMS 1; 2 AND 3</scope>
    <scope>SUBCELLULAR LOCATION</scope>
    <source>
        <strain>cv. Columbia</strain>
    </source>
</reference>
<reference key="8">
    <citation type="journal article" date="2007" name="Plant Physiol.">
        <title>Genome-wide analysis of the core DNA replication machinery in the higher plants Arabidopsis and rice.</title>
        <authorList>
            <person name="Shultz R.W."/>
            <person name="Tatineni V.M."/>
            <person name="Hanley-Bowdoin L."/>
            <person name="Thompson W.F."/>
        </authorList>
    </citation>
    <scope>REVIEW</scope>
</reference>
<reference key="9">
    <citation type="journal article" date="2009" name="BMC Plant Biol.">
        <title>DNA ligase 1 deficient plants display severe growth defects and delayed repair of both DNA single and double strand breaks.</title>
        <authorList>
            <person name="Waterworth W.M."/>
            <person name="Kozak J."/>
            <person name="Provost C.M."/>
            <person name="Bray C.M."/>
            <person name="Angelis K.J."/>
            <person name="West C.E."/>
        </authorList>
    </citation>
    <scope>FUNCTION</scope>
    <scope>DISRUPTION PHENOTYPE</scope>
    <source>
        <strain>cv. Columbia</strain>
    </source>
</reference>
<reference key="10">
    <citation type="journal article" date="2010" name="Development">
        <title>DNA LIGASE I exerts a maternal effect on seed development in Arabidopsis thaliana.</title>
        <authorList>
            <person name="Andreuzza S."/>
            <person name="Li J."/>
            <person name="Guitton A.-E."/>
            <person name="Faure J.-E."/>
            <person name="Casanova S."/>
            <person name="Park J.-S."/>
            <person name="Choi Y."/>
            <person name="Chen Z."/>
            <person name="Berger F."/>
        </authorList>
    </citation>
    <scope>FUNCTION</scope>
    <scope>TISSUE SPECIFICITY</scope>
    <scope>SUBCELLULAR LOCATION</scope>
    <scope>DEVELOPMENTAL STAGE</scope>
</reference>
<evidence type="ECO:0000250" key="1"/>
<evidence type="ECO:0000255" key="2"/>
<evidence type="ECO:0000255" key="3">
    <source>
        <dbReference type="PROSITE-ProRule" id="PRU10135"/>
    </source>
</evidence>
<evidence type="ECO:0000256" key="4">
    <source>
        <dbReference type="SAM" id="MobiDB-lite"/>
    </source>
</evidence>
<evidence type="ECO:0000269" key="5">
    <source>
    </source>
</evidence>
<evidence type="ECO:0000269" key="6">
    <source>
    </source>
</evidence>
<evidence type="ECO:0000305" key="7"/>
<organism>
    <name type="scientific">Arabidopsis thaliana</name>
    <name type="common">Mouse-ear cress</name>
    <dbReference type="NCBI Taxonomy" id="3702"/>
    <lineage>
        <taxon>Eukaryota</taxon>
        <taxon>Viridiplantae</taxon>
        <taxon>Streptophyta</taxon>
        <taxon>Embryophyta</taxon>
        <taxon>Tracheophyta</taxon>
        <taxon>Spermatophyta</taxon>
        <taxon>Magnoliopsida</taxon>
        <taxon>eudicotyledons</taxon>
        <taxon>Gunneridae</taxon>
        <taxon>Pentapetalae</taxon>
        <taxon>rosids</taxon>
        <taxon>malvids</taxon>
        <taxon>Brassicales</taxon>
        <taxon>Brassicaceae</taxon>
        <taxon>Camelineae</taxon>
        <taxon>Arabidopsis</taxon>
    </lineage>
</organism>
<comment type="function">
    <text evidence="5 6">Essential protein. DNA ligase that seals nicks in double-stranded DNA during DNA replication, DNA recombination and DNA repair. Involved in repair of both single strand breaks (SSBs) and double strand breaks (DSBs). Required in the endosperm for embryogenesis, probably to repair DNA-breaks generated by DME.</text>
</comment>
<comment type="catalytic activity">
    <reaction evidence="3">
        <text>ATP + (deoxyribonucleotide)n-3'-hydroxyl + 5'-phospho-(deoxyribonucleotide)m = (deoxyribonucleotide)n+m + AMP + diphosphate.</text>
        <dbReference type="EC" id="6.5.1.1"/>
    </reaction>
</comment>
<comment type="cofactor">
    <cofactor evidence="1">
        <name>Mg(2+)</name>
        <dbReference type="ChEBI" id="CHEBI:18420"/>
    </cofactor>
</comment>
<comment type="subcellular location">
    <molecule>Isoform 1</molecule>
    <subcellularLocation>
        <location>Mitochondrion</location>
    </subcellularLocation>
</comment>
<comment type="subcellular location">
    <molecule>Isoform 2</molecule>
    <subcellularLocation>
        <location>Nucleus</location>
    </subcellularLocation>
</comment>
<comment type="subcellular location">
    <molecule>Isoform 3</molecule>
    <subcellularLocation>
        <location>Nucleus</location>
    </subcellularLocation>
</comment>
<comment type="alternative products">
    <event type="alternative initiation"/>
    <isoform>
        <id>Q42572-1</id>
        <name>1</name>
        <sequence type="displayed"/>
    </isoform>
    <isoform>
        <id>Q42572-2</id>
        <name>2</name>
        <sequence type="described" ref="VSP_043694"/>
    </isoform>
    <isoform>
        <id>Q42572-3</id>
        <name>3</name>
        <sequence type="described" ref="VSP_043693"/>
    </isoform>
</comment>
<comment type="tissue specificity">
    <text evidence="6">Expressed in all vegetative and reproductive tissues.</text>
</comment>
<comment type="developmental stage">
    <text evidence="6">In the mature male gametophyte, expressed in the vegetative cell as well as in the two sperm cells. In the mature female gametes, accumulates in the embryo sac; mostly expressed in the central cell nucleus and, at lower levels, in the egg cell and synergids. After fertilization, localized in the syncytial endosperm and in the embryo.</text>
</comment>
<comment type="disruption phenotype">
    <text evidence="5">Lethal.</text>
</comment>
<comment type="similarity">
    <text evidence="7">Belongs to the ATP-dependent DNA ligase family.</text>
</comment>
<comment type="sequence caution" evidence="7">
    <conflict type="erroneous gene model prediction">
        <sequence resource="EMBL-CDS" id="AAF18258"/>
    </conflict>
</comment>
<comment type="sequence caution" evidence="7">
    <conflict type="erroneous gene model prediction">
        <sequence resource="EMBL-CDS" id="AAF79833"/>
    </conflict>
</comment>
<comment type="sequence caution" evidence="7">
    <conflict type="erroneous initiation">
        <sequence resource="EMBL-CDS" id="BAD95276"/>
    </conflict>
    <text>Truncated N-terminus.</text>
</comment>
<protein>
    <recommendedName>
        <fullName>DNA ligase 1</fullName>
        <shortName>AtLIG1</shortName>
        <ecNumber evidence="3">6.5.1.1</ecNumber>
    </recommendedName>
    <alternativeName>
        <fullName>DNA ligase I</fullName>
    </alternativeName>
    <alternativeName>
        <fullName>Polydeoxyribonucleotide synthase [ATP] 1</fullName>
    </alternativeName>
</protein>
<dbReference type="EC" id="6.5.1.1" evidence="3"/>
<dbReference type="EMBL" id="X97924">
    <property type="protein sequence ID" value="CAA66599.1"/>
    <property type="molecule type" value="mRNA"/>
</dbReference>
<dbReference type="EMBL" id="AC011438">
    <property type="protein sequence ID" value="AAF18258.1"/>
    <property type="status" value="ALT_SEQ"/>
    <property type="molecule type" value="Genomic_DNA"/>
</dbReference>
<dbReference type="EMBL" id="AC026875">
    <property type="protein sequence ID" value="AAF79833.1"/>
    <property type="status" value="ALT_SEQ"/>
    <property type="molecule type" value="Genomic_DNA"/>
</dbReference>
<dbReference type="EMBL" id="CP002684">
    <property type="protein sequence ID" value="AEE28251.1"/>
    <property type="molecule type" value="Genomic_DNA"/>
</dbReference>
<dbReference type="EMBL" id="AK117238">
    <property type="protein sequence ID" value="BAC41914.1"/>
    <property type="molecule type" value="mRNA"/>
</dbReference>
<dbReference type="EMBL" id="BT005964">
    <property type="protein sequence ID" value="AAO64899.1"/>
    <property type="molecule type" value="mRNA"/>
</dbReference>
<dbReference type="EMBL" id="AK222166">
    <property type="protein sequence ID" value="BAD95276.1"/>
    <property type="status" value="ALT_INIT"/>
    <property type="molecule type" value="mRNA"/>
</dbReference>
<dbReference type="PIR" id="S71278">
    <property type="entry name" value="S71278"/>
</dbReference>
<dbReference type="RefSeq" id="NP_172293.2">
    <molecule id="Q42572-1"/>
    <property type="nucleotide sequence ID" value="NM_100689.5"/>
</dbReference>
<dbReference type="SMR" id="Q42572"/>
<dbReference type="BioGRID" id="22574">
    <property type="interactions" value="1"/>
</dbReference>
<dbReference type="FunCoup" id="Q42572">
    <property type="interactions" value="2924"/>
</dbReference>
<dbReference type="STRING" id="3702.Q42572"/>
<dbReference type="iPTMnet" id="Q42572"/>
<dbReference type="PaxDb" id="3702-AT1G08130.1"/>
<dbReference type="ProteomicsDB" id="222610">
    <molecule id="Q42572-1"/>
</dbReference>
<dbReference type="EnsemblPlants" id="AT1G08130.1">
    <molecule id="Q42572-1"/>
    <property type="protein sequence ID" value="AT1G08130.1"/>
    <property type="gene ID" value="AT1G08130"/>
</dbReference>
<dbReference type="GeneID" id="837333"/>
<dbReference type="Gramene" id="AT1G08130.1">
    <molecule id="Q42572-1"/>
    <property type="protein sequence ID" value="AT1G08130.1"/>
    <property type="gene ID" value="AT1G08130"/>
</dbReference>
<dbReference type="KEGG" id="ath:AT1G08130"/>
<dbReference type="Araport" id="AT1G08130"/>
<dbReference type="TAIR" id="AT1G08130">
    <property type="gene designation" value="LIG1"/>
</dbReference>
<dbReference type="eggNOG" id="KOG0967">
    <property type="taxonomic scope" value="Eukaryota"/>
</dbReference>
<dbReference type="HOGENOM" id="CLU_005138_4_0_1"/>
<dbReference type="InParanoid" id="Q42572"/>
<dbReference type="OMA" id="WIKYKRD"/>
<dbReference type="PhylomeDB" id="Q42572"/>
<dbReference type="CD-CODE" id="4299E36E">
    <property type="entry name" value="Nucleolus"/>
</dbReference>
<dbReference type="PRO" id="PR:Q42572"/>
<dbReference type="Proteomes" id="UP000006548">
    <property type="component" value="Chromosome 1"/>
</dbReference>
<dbReference type="ExpressionAtlas" id="Q42572">
    <property type="expression patterns" value="baseline and differential"/>
</dbReference>
<dbReference type="GO" id="GO:0005739">
    <property type="term" value="C:mitochondrion"/>
    <property type="evidence" value="ECO:0000314"/>
    <property type="project" value="TAIR"/>
</dbReference>
<dbReference type="GO" id="GO:0005730">
    <property type="term" value="C:nucleolus"/>
    <property type="evidence" value="ECO:0000314"/>
    <property type="project" value="TAIR"/>
</dbReference>
<dbReference type="GO" id="GO:0005634">
    <property type="term" value="C:nucleus"/>
    <property type="evidence" value="ECO:0000314"/>
    <property type="project" value="TAIR"/>
</dbReference>
<dbReference type="GO" id="GO:0005524">
    <property type="term" value="F:ATP binding"/>
    <property type="evidence" value="ECO:0007669"/>
    <property type="project" value="UniProtKB-KW"/>
</dbReference>
<dbReference type="GO" id="GO:0003677">
    <property type="term" value="F:DNA binding"/>
    <property type="evidence" value="ECO:0007669"/>
    <property type="project" value="InterPro"/>
</dbReference>
<dbReference type="GO" id="GO:0003910">
    <property type="term" value="F:DNA ligase (ATP) activity"/>
    <property type="evidence" value="ECO:0007669"/>
    <property type="project" value="UniProtKB-EC"/>
</dbReference>
<dbReference type="GO" id="GO:0046872">
    <property type="term" value="F:metal ion binding"/>
    <property type="evidence" value="ECO:0007669"/>
    <property type="project" value="UniProtKB-KW"/>
</dbReference>
<dbReference type="GO" id="GO:0051301">
    <property type="term" value="P:cell division"/>
    <property type="evidence" value="ECO:0007669"/>
    <property type="project" value="UniProtKB-KW"/>
</dbReference>
<dbReference type="GO" id="GO:0071897">
    <property type="term" value="P:DNA biosynthetic process"/>
    <property type="evidence" value="ECO:0007669"/>
    <property type="project" value="InterPro"/>
</dbReference>
<dbReference type="GO" id="GO:0006310">
    <property type="term" value="P:DNA recombination"/>
    <property type="evidence" value="ECO:0007669"/>
    <property type="project" value="UniProtKB-KW"/>
</dbReference>
<dbReference type="GO" id="GO:0006260">
    <property type="term" value="P:DNA replication"/>
    <property type="evidence" value="ECO:0000315"/>
    <property type="project" value="UniProtKB"/>
</dbReference>
<dbReference type="GO" id="GO:0006302">
    <property type="term" value="P:double-strand break repair"/>
    <property type="evidence" value="ECO:0000315"/>
    <property type="project" value="UniProtKB"/>
</dbReference>
<dbReference type="GO" id="GO:0000012">
    <property type="term" value="P:single strand break repair"/>
    <property type="evidence" value="ECO:0000315"/>
    <property type="project" value="UniProtKB"/>
</dbReference>
<dbReference type="CDD" id="cd07900">
    <property type="entry name" value="Adenylation_DNA_ligase_I_Euk"/>
    <property type="match status" value="1"/>
</dbReference>
<dbReference type="CDD" id="cd07969">
    <property type="entry name" value="OBF_DNA_ligase_I"/>
    <property type="match status" value="1"/>
</dbReference>
<dbReference type="FunFam" id="1.10.3260.10:FF:000001">
    <property type="entry name" value="DNA ligase"/>
    <property type="match status" value="1"/>
</dbReference>
<dbReference type="FunFam" id="2.40.50.140:FF:000062">
    <property type="entry name" value="DNA ligase"/>
    <property type="match status" value="1"/>
</dbReference>
<dbReference type="FunFam" id="3.30.470.30:FF:000016">
    <property type="entry name" value="DNA ligase"/>
    <property type="match status" value="1"/>
</dbReference>
<dbReference type="Gene3D" id="3.30.1490.70">
    <property type="match status" value="1"/>
</dbReference>
<dbReference type="Gene3D" id="1.10.3260.10">
    <property type="entry name" value="DNA ligase, ATP-dependent, N-terminal domain"/>
    <property type="match status" value="1"/>
</dbReference>
<dbReference type="Gene3D" id="3.30.470.30">
    <property type="entry name" value="DNA ligase/mRNA capping enzyme"/>
    <property type="match status" value="1"/>
</dbReference>
<dbReference type="Gene3D" id="2.40.50.140">
    <property type="entry name" value="Nucleic acid-binding proteins"/>
    <property type="match status" value="1"/>
</dbReference>
<dbReference type="InterPro" id="IPR050191">
    <property type="entry name" value="ATP-dep_DNA_ligase"/>
</dbReference>
<dbReference type="InterPro" id="IPR000977">
    <property type="entry name" value="DNA_ligase_ATP-dep"/>
</dbReference>
<dbReference type="InterPro" id="IPR012309">
    <property type="entry name" value="DNA_ligase_ATP-dep_C"/>
</dbReference>
<dbReference type="InterPro" id="IPR012310">
    <property type="entry name" value="DNA_ligase_ATP-dep_cent"/>
</dbReference>
<dbReference type="InterPro" id="IPR016059">
    <property type="entry name" value="DNA_ligase_ATP-dep_CS"/>
</dbReference>
<dbReference type="InterPro" id="IPR012308">
    <property type="entry name" value="DNA_ligase_ATP-dep_N"/>
</dbReference>
<dbReference type="InterPro" id="IPR036599">
    <property type="entry name" value="DNA_ligase_N_sf"/>
</dbReference>
<dbReference type="InterPro" id="IPR012340">
    <property type="entry name" value="NA-bd_OB-fold"/>
</dbReference>
<dbReference type="NCBIfam" id="TIGR00574">
    <property type="entry name" value="dnl1"/>
    <property type="match status" value="1"/>
</dbReference>
<dbReference type="PANTHER" id="PTHR45674:SF4">
    <property type="entry name" value="DNA LIGASE 1"/>
    <property type="match status" value="1"/>
</dbReference>
<dbReference type="PANTHER" id="PTHR45674">
    <property type="entry name" value="DNA LIGASE 1/3 FAMILY MEMBER"/>
    <property type="match status" value="1"/>
</dbReference>
<dbReference type="Pfam" id="PF04679">
    <property type="entry name" value="DNA_ligase_A_C"/>
    <property type="match status" value="1"/>
</dbReference>
<dbReference type="Pfam" id="PF01068">
    <property type="entry name" value="DNA_ligase_A_M"/>
    <property type="match status" value="1"/>
</dbReference>
<dbReference type="Pfam" id="PF04675">
    <property type="entry name" value="DNA_ligase_A_N"/>
    <property type="match status" value="1"/>
</dbReference>
<dbReference type="SUPFAM" id="SSF117018">
    <property type="entry name" value="ATP-dependent DNA ligase DNA-binding domain"/>
    <property type="match status" value="1"/>
</dbReference>
<dbReference type="SUPFAM" id="SSF56091">
    <property type="entry name" value="DNA ligase/mRNA capping enzyme, catalytic domain"/>
    <property type="match status" value="1"/>
</dbReference>
<dbReference type="SUPFAM" id="SSF50249">
    <property type="entry name" value="Nucleic acid-binding proteins"/>
    <property type="match status" value="1"/>
</dbReference>
<dbReference type="PROSITE" id="PS00697">
    <property type="entry name" value="DNA_LIGASE_A1"/>
    <property type="match status" value="1"/>
</dbReference>
<dbReference type="PROSITE" id="PS00333">
    <property type="entry name" value="DNA_LIGASE_A2"/>
    <property type="match status" value="1"/>
</dbReference>
<dbReference type="PROSITE" id="PS50160">
    <property type="entry name" value="DNA_LIGASE_A3"/>
    <property type="match status" value="1"/>
</dbReference>